<keyword id="KW-0025">Alternative splicing</keyword>
<keyword id="KW-0150">Chloroplast</keyword>
<keyword id="KW-0326">Glycosidase</keyword>
<keyword id="KW-0378">Hydrolase</keyword>
<keyword id="KW-0511">Multifunctional enzyme</keyword>
<keyword id="KW-0521">NADP</keyword>
<keyword id="KW-0560">Oxidoreductase</keyword>
<keyword id="KW-0934">Plastid</keyword>
<keyword id="KW-1185">Reference proteome</keyword>
<keyword id="KW-0809">Transit peptide</keyword>
<sequence>MALSFRISSSSPLICRATLSNGDNSRNYHTTDAAFIRRAADLSEMSAGLTSPHPNFGCVIATSSGKVAGEGYLYAQGTKPAEALAVEAAGEFSRGATAYLNMEPGDCHGDHTAVSALVQAGIERVVVGIRHPLQHLRGSAIRELRSHGIEVNVLGEDFESKVLEDARKSCLLVNAPLIHRACSRVPFSVLKYAMTLDGKIAASSGHAAWISSKLSRTRVFELRGGSDAVIVGGNTVRQDDPRLTARHGQGHTPTRIVMTQSLDLPEKANLWDVSEVSTIVVTQRGARKSFQKLLASKGVEVVEFDMLNPREVMEYFHLRGYLSILWECGGTLAASAISSSVIHKVVAFVAPKIIGGSKAPSPVGDLGMVEMTQALNLIDVCYEQVGPDMLVSGFLQPIPDLLPVIPSEDATVEIDPSVDPFEPSIIFFYKTWDLYGMWNITIRYHTTVHVKWYLALSKKHNLLILHPKTLKANKFVGVENPKAYDCVEKIRTARSPEEAALIGRSTLRQKPELVRNDWEDVKIEVMYKALKCKFSTYPHLKSMLLSTIGTVLVEASPHDLFWGGGREGEGLNYLGRLLMQLRSEYLGESSVSAEKTSSA</sequence>
<protein>
    <recommendedName>
        <fullName>Riboflavin biosynthesis protein PYRR, chloroplastic</fullName>
    </recommendedName>
    <domain>
        <recommendedName>
            <fullName>Inactive diaminohydroxyphosphoribosylaminopyrimidine deaminase</fullName>
            <shortName>DRAP deaminase</shortName>
        </recommendedName>
        <alternativeName>
            <fullName>Riboflavin-specific deaminase</fullName>
        </alternativeName>
    </domain>
    <domain>
        <recommendedName>
            <fullName>5-amino-6-(5-phosphoribosylamino)uracil reductase</fullName>
            <ecNumber>1.1.1.193</ecNumber>
        </recommendedName>
        <alternativeName>
            <fullName>HTP reductase</fullName>
        </alternativeName>
    </domain>
    <domain>
        <recommendedName>
            <fullName evidence="6">Riboflavin biosynthesis intermediates N-glycosidase</fullName>
            <ecNumber evidence="4">3.2.2.-</ecNumber>
        </recommendedName>
    </domain>
</protein>
<reference key="1">
    <citation type="journal article" date="2000" name="Nature">
        <title>Sequence and analysis of chromosome 3 of the plant Arabidopsis thaliana.</title>
        <authorList>
            <person name="Salanoubat M."/>
            <person name="Lemcke K."/>
            <person name="Rieger M."/>
            <person name="Ansorge W."/>
            <person name="Unseld M."/>
            <person name="Fartmann B."/>
            <person name="Valle G."/>
            <person name="Bloecker H."/>
            <person name="Perez-Alonso M."/>
            <person name="Obermaier B."/>
            <person name="Delseny M."/>
            <person name="Boutry M."/>
            <person name="Grivell L.A."/>
            <person name="Mache R."/>
            <person name="Puigdomenech P."/>
            <person name="De Simone V."/>
            <person name="Choisne N."/>
            <person name="Artiguenave F."/>
            <person name="Robert C."/>
            <person name="Brottier P."/>
            <person name="Wincker P."/>
            <person name="Cattolico L."/>
            <person name="Weissenbach J."/>
            <person name="Saurin W."/>
            <person name="Quetier F."/>
            <person name="Schaefer M."/>
            <person name="Mueller-Auer S."/>
            <person name="Gabel C."/>
            <person name="Fuchs M."/>
            <person name="Benes V."/>
            <person name="Wurmbach E."/>
            <person name="Drzonek H."/>
            <person name="Erfle H."/>
            <person name="Jordan N."/>
            <person name="Bangert S."/>
            <person name="Wiedelmann R."/>
            <person name="Kranz H."/>
            <person name="Voss H."/>
            <person name="Holland R."/>
            <person name="Brandt P."/>
            <person name="Nyakatura G."/>
            <person name="Vezzi A."/>
            <person name="D'Angelo M."/>
            <person name="Pallavicini A."/>
            <person name="Toppo S."/>
            <person name="Simionati B."/>
            <person name="Conrad A."/>
            <person name="Hornischer K."/>
            <person name="Kauer G."/>
            <person name="Loehnert T.-H."/>
            <person name="Nordsiek G."/>
            <person name="Reichelt J."/>
            <person name="Scharfe M."/>
            <person name="Schoen O."/>
            <person name="Bargues M."/>
            <person name="Terol J."/>
            <person name="Climent J."/>
            <person name="Navarro P."/>
            <person name="Collado C."/>
            <person name="Perez-Perez A."/>
            <person name="Ottenwaelder B."/>
            <person name="Duchemin D."/>
            <person name="Cooke R."/>
            <person name="Laudie M."/>
            <person name="Berger-Llauro C."/>
            <person name="Purnelle B."/>
            <person name="Masuy D."/>
            <person name="de Haan M."/>
            <person name="Maarse A.C."/>
            <person name="Alcaraz J.-P."/>
            <person name="Cottet A."/>
            <person name="Casacuberta E."/>
            <person name="Monfort A."/>
            <person name="Argiriou A."/>
            <person name="Flores M."/>
            <person name="Liguori R."/>
            <person name="Vitale D."/>
            <person name="Mannhaupt G."/>
            <person name="Haase D."/>
            <person name="Schoof H."/>
            <person name="Rudd S."/>
            <person name="Zaccaria P."/>
            <person name="Mewes H.-W."/>
            <person name="Mayer K.F.X."/>
            <person name="Kaul S."/>
            <person name="Town C.D."/>
            <person name="Koo H.L."/>
            <person name="Tallon L.J."/>
            <person name="Jenkins J."/>
            <person name="Rooney T."/>
            <person name="Rizzo M."/>
            <person name="Walts A."/>
            <person name="Utterback T."/>
            <person name="Fujii C.Y."/>
            <person name="Shea T.P."/>
            <person name="Creasy T.H."/>
            <person name="Haas B."/>
            <person name="Maiti R."/>
            <person name="Wu D."/>
            <person name="Peterson J."/>
            <person name="Van Aken S."/>
            <person name="Pai G."/>
            <person name="Militscher J."/>
            <person name="Sellers P."/>
            <person name="Gill J.E."/>
            <person name="Feldblyum T.V."/>
            <person name="Preuss D."/>
            <person name="Lin X."/>
            <person name="Nierman W.C."/>
            <person name="Salzberg S.L."/>
            <person name="White O."/>
            <person name="Venter J.C."/>
            <person name="Fraser C.M."/>
            <person name="Kaneko T."/>
            <person name="Nakamura Y."/>
            <person name="Sato S."/>
            <person name="Kato T."/>
            <person name="Asamizu E."/>
            <person name="Sasamoto S."/>
            <person name="Kimura T."/>
            <person name="Idesawa K."/>
            <person name="Kawashima K."/>
            <person name="Kishida Y."/>
            <person name="Kiyokawa C."/>
            <person name="Kohara M."/>
            <person name="Matsumoto M."/>
            <person name="Matsuno A."/>
            <person name="Muraki A."/>
            <person name="Nakayama S."/>
            <person name="Nakazaki N."/>
            <person name="Shinpo S."/>
            <person name="Takeuchi C."/>
            <person name="Wada T."/>
            <person name="Watanabe A."/>
            <person name="Yamada M."/>
            <person name="Yasuda M."/>
            <person name="Tabata S."/>
        </authorList>
    </citation>
    <scope>NUCLEOTIDE SEQUENCE [LARGE SCALE GENOMIC DNA]</scope>
    <source>
        <strain>cv. Columbia</strain>
    </source>
</reference>
<reference key="2">
    <citation type="journal article" date="2017" name="Plant J.">
        <title>Araport11: a complete reannotation of the Arabidopsis thaliana reference genome.</title>
        <authorList>
            <person name="Cheng C.Y."/>
            <person name="Krishnakumar V."/>
            <person name="Chan A.P."/>
            <person name="Thibaud-Nissen F."/>
            <person name="Schobel S."/>
            <person name="Town C.D."/>
        </authorList>
    </citation>
    <scope>GENOME REANNOTATION</scope>
    <source>
        <strain>cv. Columbia</strain>
    </source>
</reference>
<reference key="3">
    <citation type="journal article" date="2010" name="J. Plant Physiol.">
        <title>The photosensitive phs1 mutant is impaired in the riboflavin biogenesis pathway.</title>
        <authorList>
            <person name="Ouyang M."/>
            <person name="Ma J."/>
            <person name="Zou M."/>
            <person name="Guo J."/>
            <person name="Wang L."/>
            <person name="Lu C."/>
            <person name="Zhang L."/>
        </authorList>
    </citation>
    <scope>IDENTIFICATION</scope>
    <scope>FUNCTION</scope>
    <scope>MUTAGENESIS OF 416-PRO--ALA-599</scope>
    <source>
        <strain>cv. Columbia</strain>
    </source>
</reference>
<reference key="4">
    <citation type="journal article" date="2013" name="Plant Physiol.">
        <title>Identification and characterization of the missing pyrimidine reductase in the plant riboflavin biosynthesis pathway.</title>
        <authorList>
            <person name="Hasnain G."/>
            <person name="Frelin O."/>
            <person name="Roje S."/>
            <person name="Ellens K.W."/>
            <person name="Ali K."/>
            <person name="Guan J.C."/>
            <person name="Garrett T.J."/>
            <person name="de Crecy-Lagard V."/>
            <person name="Gregory J.F. III"/>
            <person name="McCarty D.R."/>
            <person name="Hanson A.D."/>
        </authorList>
    </citation>
    <scope>FUNCTION</scope>
    <scope>CATALYTIC ACTIVITY</scope>
    <scope>SUBCELLULAR LOCATION</scope>
</reference>
<reference key="5">
    <citation type="journal article" date="2015" name="Biochem. J.">
        <title>A directed-overflow and damage-control N-glycosidase in riboflavin biosynthesis.</title>
        <authorList>
            <person name="Frelin O."/>
            <person name="Huang L."/>
            <person name="Hasnain G."/>
            <person name="Jeffryes J.G."/>
            <person name="Ziemak M.J."/>
            <person name="Rocca J.R."/>
            <person name="Wang B."/>
            <person name="Rice J."/>
            <person name="Roje S."/>
            <person name="Yurgel S.N."/>
            <person name="Gregory J.F. III"/>
            <person name="Edison A.S."/>
            <person name="Henry C.S."/>
            <person name="de Crecy-Lagard V."/>
            <person name="Hanson A.D."/>
        </authorList>
    </citation>
    <scope>FUNCTION</scope>
    <scope>CATALYTIC ACTIVITY</scope>
    <scope>SUBSTRATE SPECIFICITY</scope>
    <scope>MUTAGENESIS OF 416-PRO--ALA-599</scope>
</reference>
<accession>Q9STY4</accession>
<dbReference type="EC" id="1.1.1.193"/>
<dbReference type="EC" id="3.2.2.-" evidence="4"/>
<dbReference type="EMBL" id="AL096860">
    <property type="protein sequence ID" value="CAB51211.1"/>
    <property type="molecule type" value="Genomic_DNA"/>
</dbReference>
<dbReference type="EMBL" id="CP002686">
    <property type="protein sequence ID" value="AEE78275.1"/>
    <property type="molecule type" value="Genomic_DNA"/>
</dbReference>
<dbReference type="PIR" id="T12994">
    <property type="entry name" value="T12994"/>
</dbReference>
<dbReference type="RefSeq" id="NP_190323.1">
    <molecule id="Q9STY4-1"/>
    <property type="nucleotide sequence ID" value="NM_114607.3"/>
</dbReference>
<dbReference type="SMR" id="Q9STY4"/>
<dbReference type="FunCoup" id="Q9STY4">
    <property type="interactions" value="471"/>
</dbReference>
<dbReference type="STRING" id="3702.Q9STY4"/>
<dbReference type="iPTMnet" id="Q9STY4"/>
<dbReference type="PaxDb" id="3702-AT3G47390.1"/>
<dbReference type="EnsemblPlants" id="AT3G47390.1">
    <molecule id="Q9STY4-1"/>
    <property type="protein sequence ID" value="AT3G47390.1"/>
    <property type="gene ID" value="AT3G47390"/>
</dbReference>
<dbReference type="GeneID" id="823893"/>
<dbReference type="Gramene" id="AT3G47390.1">
    <molecule id="Q9STY4-1"/>
    <property type="protein sequence ID" value="AT3G47390.1"/>
    <property type="gene ID" value="AT3G47390"/>
</dbReference>
<dbReference type="KEGG" id="ath:AT3G47390"/>
<dbReference type="Araport" id="AT3G47390"/>
<dbReference type="TAIR" id="AT3G47390">
    <property type="gene designation" value="PHS1"/>
</dbReference>
<dbReference type="eggNOG" id="KOG1018">
    <property type="taxonomic scope" value="Eukaryota"/>
</dbReference>
<dbReference type="InParanoid" id="Q9STY4"/>
<dbReference type="PhylomeDB" id="Q9STY4"/>
<dbReference type="BioCyc" id="ARA:AT3G47390-MONOMER"/>
<dbReference type="UniPathway" id="UPA00275">
    <property type="reaction ID" value="UER00402"/>
</dbReference>
<dbReference type="PRO" id="PR:Q9STY4"/>
<dbReference type="Proteomes" id="UP000006548">
    <property type="component" value="Chromosome 3"/>
</dbReference>
<dbReference type="ExpressionAtlas" id="Q9STY4">
    <property type="expression patterns" value="baseline and differential"/>
</dbReference>
<dbReference type="GO" id="GO:0009507">
    <property type="term" value="C:chloroplast"/>
    <property type="evidence" value="ECO:0000314"/>
    <property type="project" value="TAIR"/>
</dbReference>
<dbReference type="GO" id="GO:0008703">
    <property type="term" value="F:5-amino-6-(5-phosphoribosylamino)uracil reductase activity"/>
    <property type="evidence" value="ECO:0000314"/>
    <property type="project" value="TAIR"/>
</dbReference>
<dbReference type="GO" id="GO:0008835">
    <property type="term" value="F:diaminohydroxyphosphoribosylaminopyrimidine deaminase activity"/>
    <property type="evidence" value="ECO:0007669"/>
    <property type="project" value="InterPro"/>
</dbReference>
<dbReference type="GO" id="GO:0016799">
    <property type="term" value="F:hydrolase activity, hydrolyzing N-glycosyl compounds"/>
    <property type="evidence" value="ECO:0000314"/>
    <property type="project" value="UniProtKB"/>
</dbReference>
<dbReference type="GO" id="GO:0050661">
    <property type="term" value="F:NADP binding"/>
    <property type="evidence" value="ECO:0007669"/>
    <property type="project" value="InterPro"/>
</dbReference>
<dbReference type="GO" id="GO:1901135">
    <property type="term" value="P:carbohydrate derivative metabolic process"/>
    <property type="evidence" value="ECO:0000314"/>
    <property type="project" value="UniProtKB"/>
</dbReference>
<dbReference type="GO" id="GO:0009658">
    <property type="term" value="P:chloroplast organization"/>
    <property type="evidence" value="ECO:0000315"/>
    <property type="project" value="TAIR"/>
</dbReference>
<dbReference type="GO" id="GO:0046443">
    <property type="term" value="P:FAD metabolic process"/>
    <property type="evidence" value="ECO:0000315"/>
    <property type="project" value="TAIR"/>
</dbReference>
<dbReference type="GO" id="GO:0009644">
    <property type="term" value="P:response to high light intensity"/>
    <property type="evidence" value="ECO:0000315"/>
    <property type="project" value="TAIR"/>
</dbReference>
<dbReference type="GO" id="GO:0009231">
    <property type="term" value="P:riboflavin biosynthetic process"/>
    <property type="evidence" value="ECO:0007669"/>
    <property type="project" value="UniProtKB-UniPathway"/>
</dbReference>
<dbReference type="CDD" id="cd15457">
    <property type="entry name" value="NADAR"/>
    <property type="match status" value="1"/>
</dbReference>
<dbReference type="CDD" id="cd01284">
    <property type="entry name" value="Riboflavin_deaminase-reductase"/>
    <property type="match status" value="1"/>
</dbReference>
<dbReference type="FunFam" id="3.40.140.10:FF:000071">
    <property type="entry name" value="Riboflavin biosynthesis protein PYRR, chloroplastic"/>
    <property type="match status" value="1"/>
</dbReference>
<dbReference type="Gene3D" id="3.40.140.10">
    <property type="entry name" value="Cytidine Deaminase, domain 2"/>
    <property type="match status" value="1"/>
</dbReference>
<dbReference type="Gene3D" id="3.40.430.10">
    <property type="entry name" value="Dihydrofolate Reductase, subunit A"/>
    <property type="match status" value="1"/>
</dbReference>
<dbReference type="Gene3D" id="1.10.357.40">
    <property type="entry name" value="YbiA-like"/>
    <property type="match status" value="1"/>
</dbReference>
<dbReference type="InterPro" id="IPR002125">
    <property type="entry name" value="CMP_dCMP_dom"/>
</dbReference>
<dbReference type="InterPro" id="IPR016193">
    <property type="entry name" value="Cytidine_deaminase-like"/>
</dbReference>
<dbReference type="InterPro" id="IPR024072">
    <property type="entry name" value="DHFR-like_dom_sf"/>
</dbReference>
<dbReference type="InterPro" id="IPR004794">
    <property type="entry name" value="Eubact_RibD"/>
</dbReference>
<dbReference type="InterPro" id="IPR012816">
    <property type="entry name" value="NADAR"/>
</dbReference>
<dbReference type="InterPro" id="IPR011549">
    <property type="entry name" value="RibD_C"/>
</dbReference>
<dbReference type="InterPro" id="IPR002734">
    <property type="entry name" value="RibDG_C"/>
</dbReference>
<dbReference type="InterPro" id="IPR050765">
    <property type="entry name" value="Riboflavin_Biosynth_HTPR"/>
</dbReference>
<dbReference type="InterPro" id="IPR037238">
    <property type="entry name" value="YbiA-like_sf"/>
</dbReference>
<dbReference type="NCBIfam" id="TIGR00326">
    <property type="entry name" value="eubact_ribD"/>
    <property type="match status" value="1"/>
</dbReference>
<dbReference type="NCBIfam" id="TIGR00227">
    <property type="entry name" value="ribD_Cterm"/>
    <property type="match status" value="1"/>
</dbReference>
<dbReference type="NCBIfam" id="TIGR02464">
    <property type="entry name" value="ribofla_fusion"/>
    <property type="match status" value="1"/>
</dbReference>
<dbReference type="PANTHER" id="PTHR38011:SF7">
    <property type="entry name" value="2,5-DIAMINO-6-RIBOSYLAMINO-4(3H)-PYRIMIDINONE 5'-PHOSPHATE REDUCTASE"/>
    <property type="match status" value="1"/>
</dbReference>
<dbReference type="PANTHER" id="PTHR38011">
    <property type="entry name" value="DIHYDROFOLATE REDUCTASE FAMILY PROTEIN (AFU_ORTHOLOGUE AFUA_8G06820)"/>
    <property type="match status" value="1"/>
</dbReference>
<dbReference type="Pfam" id="PF00383">
    <property type="entry name" value="dCMP_cyt_deam_1"/>
    <property type="match status" value="1"/>
</dbReference>
<dbReference type="Pfam" id="PF08719">
    <property type="entry name" value="NADAR"/>
    <property type="match status" value="1"/>
</dbReference>
<dbReference type="Pfam" id="PF01872">
    <property type="entry name" value="RibD_C"/>
    <property type="match status" value="1"/>
</dbReference>
<dbReference type="SUPFAM" id="SSF53927">
    <property type="entry name" value="Cytidine deaminase-like"/>
    <property type="match status" value="1"/>
</dbReference>
<dbReference type="SUPFAM" id="SSF53597">
    <property type="entry name" value="Dihydrofolate reductase-like"/>
    <property type="match status" value="1"/>
</dbReference>
<dbReference type="SUPFAM" id="SSF143990">
    <property type="entry name" value="YbiA-like"/>
    <property type="match status" value="1"/>
</dbReference>
<dbReference type="PROSITE" id="PS51747">
    <property type="entry name" value="CYT_DCMP_DEAMINASES_2"/>
    <property type="match status" value="1"/>
</dbReference>
<name>RIBRX_ARATH</name>
<evidence type="ECO:0000255" key="1">
    <source>
        <dbReference type="PROSITE-ProRule" id="PRU01083"/>
    </source>
</evidence>
<evidence type="ECO:0000269" key="2">
    <source>
    </source>
</evidence>
<evidence type="ECO:0000269" key="3">
    <source>
    </source>
</evidence>
<evidence type="ECO:0000269" key="4">
    <source>
    </source>
</evidence>
<evidence type="ECO:0000305" key="5"/>
<evidence type="ECO:0000305" key="6">
    <source>
    </source>
</evidence>
<feature type="transit peptide" description="Chloroplast" evidence="5">
    <location>
        <begin position="1"/>
        <end position="17"/>
    </location>
</feature>
<feature type="chain" id="PRO_0000422706" description="Riboflavin biosynthesis protein PYRR, chloroplastic">
    <location>
        <begin position="18"/>
        <end position="599"/>
    </location>
</feature>
<feature type="domain" description="CMP/dCMP-type deaminase" evidence="1">
    <location>
        <begin position="30"/>
        <end position="152"/>
    </location>
</feature>
<feature type="mutagenesis site" description="In phs1; Photosensitive phenotype under high light. In leaves grown in normal light, the FAD and FMN contents of the mutant are significantly lower (by 16% and 20% respectively) than the wild-type." evidence="2 4">
    <location>
        <begin position="416"/>
        <end position="599"/>
    </location>
</feature>
<gene>
    <name type="primary">PYRR</name>
    <name type="synonym">PHS1</name>
    <name type="ordered locus">At3g47390</name>
    <name type="ORF">T21L8.140</name>
</gene>
<comment type="function">
    <text evidence="2 3">Pyrimidine reductase involved in the riboflavin biosynthesis pathway. Also has a non-functional N-terminal deaminase domain that lacks the catalytically essential zinc-binding residues.</text>
</comment>
<comment type="function">
    <text evidence="4">Catalyzes the hydrolysis of the N-glycosidic bond in the first two intermediates of riboflavin biosynthesis, which are highly reactive metabolites, yielding relatively innocuous products. Thus, can divert a surplus of harmful intermediates into relatively harmless products and pre-empt the damage these intermediates would otherwise do. Helps maintain flavin levels. Has no activity against GTP, nucleoside monophosphates or ADP-ribose.</text>
</comment>
<comment type="catalytic activity">
    <reaction evidence="3">
        <text>5-amino-6-(5-phospho-D-ribitylamino)uracil + NADP(+) = 5-amino-6-(5-phospho-D-ribosylamino)uracil + NADPH + H(+)</text>
        <dbReference type="Rhea" id="RHEA:17845"/>
        <dbReference type="ChEBI" id="CHEBI:15378"/>
        <dbReference type="ChEBI" id="CHEBI:57783"/>
        <dbReference type="ChEBI" id="CHEBI:58349"/>
        <dbReference type="ChEBI" id="CHEBI:58421"/>
        <dbReference type="ChEBI" id="CHEBI:58453"/>
        <dbReference type="EC" id="1.1.1.193"/>
    </reaction>
</comment>
<comment type="catalytic activity">
    <reaction evidence="4">
        <text>2,5-diamino-6-hydroxy-4-(5-phosphoribosylamino)-pyrimidine + H2O = 2,5,6-triamino-4-hydroxypyrimidine + D-ribose 5-phosphate</text>
        <dbReference type="Rhea" id="RHEA:23436"/>
        <dbReference type="ChEBI" id="CHEBI:15377"/>
        <dbReference type="ChEBI" id="CHEBI:58614"/>
        <dbReference type="ChEBI" id="CHEBI:78346"/>
        <dbReference type="ChEBI" id="CHEBI:137796"/>
    </reaction>
</comment>
<comment type="catalytic activity">
    <reaction evidence="4">
        <text>5-amino-6-(5-phospho-D-ribosylamino)uracil + H2O = 5,6-diaminouracil + D-ribose 5-phosphate</text>
        <dbReference type="Rhea" id="RHEA:55020"/>
        <dbReference type="ChEBI" id="CHEBI:15377"/>
        <dbReference type="ChEBI" id="CHEBI:46252"/>
        <dbReference type="ChEBI" id="CHEBI:58453"/>
        <dbReference type="ChEBI" id="CHEBI:78346"/>
    </reaction>
</comment>
<comment type="pathway">
    <text>Cofactor biosynthesis; riboflavin biosynthesis; 5-amino-6-(D-ribitylamino)uracil from GTP: step 3/4.</text>
</comment>
<comment type="subcellular location">
    <subcellularLocation>
        <location evidence="3">Plastid</location>
        <location evidence="3">Chloroplast</location>
    </subcellularLocation>
</comment>
<comment type="alternative products">
    <event type="alternative splicing"/>
    <isoform>
        <id>Q9STY4-1</id>
        <name>1</name>
        <sequence type="displayed"/>
    </isoform>
    <text>A number of isoforms are produced. According to EST sequences.</text>
</comment>
<comment type="domain">
    <text>The C-terminal domain (416-599) is not required for the reductase activity while the non-functional deaminase domain (21-150) is necessary.</text>
</comment>
<comment type="miscellaneous">
    <text>Unlike bacteria that have a bifunctional, two-domain RibD enzyme, plants have a monofunctional reductase and a monofunctional deaminase, each having an enzymatically inactive domain.</text>
</comment>
<comment type="similarity">
    <text evidence="5">In the C-terminal section; belongs to the YbiA family.</text>
</comment>
<organism>
    <name type="scientific">Arabidopsis thaliana</name>
    <name type="common">Mouse-ear cress</name>
    <dbReference type="NCBI Taxonomy" id="3702"/>
    <lineage>
        <taxon>Eukaryota</taxon>
        <taxon>Viridiplantae</taxon>
        <taxon>Streptophyta</taxon>
        <taxon>Embryophyta</taxon>
        <taxon>Tracheophyta</taxon>
        <taxon>Spermatophyta</taxon>
        <taxon>Magnoliopsida</taxon>
        <taxon>eudicotyledons</taxon>
        <taxon>Gunneridae</taxon>
        <taxon>Pentapetalae</taxon>
        <taxon>rosids</taxon>
        <taxon>malvids</taxon>
        <taxon>Brassicales</taxon>
        <taxon>Brassicaceae</taxon>
        <taxon>Camelineae</taxon>
        <taxon>Arabidopsis</taxon>
    </lineage>
</organism>
<proteinExistence type="evidence at protein level"/>